<organism>
    <name type="scientific">Salmonella heidelberg (strain SL476)</name>
    <dbReference type="NCBI Taxonomy" id="454169"/>
    <lineage>
        <taxon>Bacteria</taxon>
        <taxon>Pseudomonadati</taxon>
        <taxon>Pseudomonadota</taxon>
        <taxon>Gammaproteobacteria</taxon>
        <taxon>Enterobacterales</taxon>
        <taxon>Enterobacteriaceae</taxon>
        <taxon>Salmonella</taxon>
    </lineage>
</organism>
<comment type="function">
    <text evidence="1">Catalyzes the initial step of the lipid cycle reactions in the biosynthesis of the cell wall peptidoglycan: transfers peptidoglycan precursor phospho-MurNAc-pentapeptide from UDP-MurNAc-pentapeptide onto the lipid carrier undecaprenyl phosphate, yielding undecaprenyl-pyrophosphoryl-MurNAc-pentapeptide, known as lipid I.</text>
</comment>
<comment type="catalytic activity">
    <reaction evidence="1">
        <text>UDP-N-acetyl-alpha-D-muramoyl-L-alanyl-gamma-D-glutamyl-meso-2,6-diaminopimeloyl-D-alanyl-D-alanine + di-trans,octa-cis-undecaprenyl phosphate = di-trans,octa-cis-undecaprenyl diphospho-N-acetyl-alpha-D-muramoyl-L-alanyl-D-glutamyl-meso-2,6-diaminopimeloyl-D-alanyl-D-alanine + UMP</text>
        <dbReference type="Rhea" id="RHEA:28386"/>
        <dbReference type="ChEBI" id="CHEBI:57865"/>
        <dbReference type="ChEBI" id="CHEBI:60392"/>
        <dbReference type="ChEBI" id="CHEBI:61386"/>
        <dbReference type="ChEBI" id="CHEBI:61387"/>
        <dbReference type="EC" id="2.7.8.13"/>
    </reaction>
</comment>
<comment type="cofactor">
    <cofactor evidence="1">
        <name>Mg(2+)</name>
        <dbReference type="ChEBI" id="CHEBI:18420"/>
    </cofactor>
</comment>
<comment type="pathway">
    <text evidence="1">Cell wall biogenesis; peptidoglycan biosynthesis.</text>
</comment>
<comment type="subcellular location">
    <subcellularLocation>
        <location evidence="1">Cell inner membrane</location>
        <topology evidence="1">Multi-pass membrane protein</topology>
    </subcellularLocation>
</comment>
<comment type="similarity">
    <text evidence="1">Belongs to the glycosyltransferase 4 family. MraY subfamily.</text>
</comment>
<feature type="chain" id="PRO_1000090668" description="Phospho-N-acetylmuramoyl-pentapeptide-transferase">
    <location>
        <begin position="1"/>
        <end position="360"/>
    </location>
</feature>
<feature type="topological domain" description="Periplasmic" evidence="1">
    <location>
        <begin position="1"/>
        <end position="25"/>
    </location>
</feature>
<feature type="transmembrane region" description="Helical" evidence="1">
    <location>
        <begin position="26"/>
        <end position="46"/>
    </location>
</feature>
<feature type="topological domain" description="Cytoplasmic" evidence="1">
    <location>
        <begin position="47"/>
        <end position="71"/>
    </location>
</feature>
<feature type="transmembrane region" description="Helical" evidence="1">
    <location>
        <begin position="72"/>
        <end position="92"/>
    </location>
</feature>
<feature type="topological domain" description="Periplasmic" evidence="1">
    <location>
        <position position="93"/>
    </location>
</feature>
<feature type="transmembrane region" description="Helical" evidence="1">
    <location>
        <begin position="94"/>
        <end position="114"/>
    </location>
</feature>
<feature type="topological domain" description="Cytoplasmic" evidence="1">
    <location>
        <begin position="115"/>
        <end position="131"/>
    </location>
</feature>
<feature type="transmembrane region" description="Helical" evidence="1">
    <location>
        <begin position="132"/>
        <end position="152"/>
    </location>
</feature>
<feature type="topological domain" description="Periplasmic" evidence="1">
    <location>
        <begin position="153"/>
        <end position="167"/>
    </location>
</feature>
<feature type="transmembrane region" description="Helical" evidence="1">
    <location>
        <begin position="168"/>
        <end position="188"/>
    </location>
</feature>
<feature type="topological domain" description="Cytoplasmic" evidence="1">
    <location>
        <begin position="189"/>
        <end position="198"/>
    </location>
</feature>
<feature type="transmembrane region" description="Helical" evidence="1">
    <location>
        <begin position="199"/>
        <end position="219"/>
    </location>
</feature>
<feature type="topological domain" description="Periplasmic" evidence="1">
    <location>
        <begin position="220"/>
        <end position="235"/>
    </location>
</feature>
<feature type="transmembrane region" description="Helical" evidence="1">
    <location>
        <begin position="236"/>
        <end position="256"/>
    </location>
</feature>
<feature type="topological domain" description="Cytoplasmic" evidence="1">
    <location>
        <begin position="257"/>
        <end position="262"/>
    </location>
</feature>
<feature type="transmembrane region" description="Helical" evidence="1">
    <location>
        <begin position="263"/>
        <end position="283"/>
    </location>
</feature>
<feature type="topological domain" description="Periplasmic" evidence="1">
    <location>
        <begin position="284"/>
        <end position="287"/>
    </location>
</feature>
<feature type="transmembrane region" description="Helical" evidence="1">
    <location>
        <begin position="288"/>
        <end position="308"/>
    </location>
</feature>
<feature type="topological domain" description="Cytoplasmic" evidence="1">
    <location>
        <begin position="309"/>
        <end position="337"/>
    </location>
</feature>
<feature type="transmembrane region" description="Helical" evidence="1">
    <location>
        <begin position="338"/>
        <end position="358"/>
    </location>
</feature>
<feature type="topological domain" description="Periplasmic" evidence="1">
    <location>
        <begin position="359"/>
        <end position="360"/>
    </location>
</feature>
<dbReference type="EC" id="2.7.8.13" evidence="1"/>
<dbReference type="EMBL" id="CP001120">
    <property type="protein sequence ID" value="ACF66589.1"/>
    <property type="molecule type" value="Genomic_DNA"/>
</dbReference>
<dbReference type="RefSeq" id="WP_000964138.1">
    <property type="nucleotide sequence ID" value="NC_011083.1"/>
</dbReference>
<dbReference type="SMR" id="B4TJ84"/>
<dbReference type="KEGG" id="seh:SeHA_C0137"/>
<dbReference type="HOGENOM" id="CLU_023982_0_0_6"/>
<dbReference type="UniPathway" id="UPA00219"/>
<dbReference type="Proteomes" id="UP000001866">
    <property type="component" value="Chromosome"/>
</dbReference>
<dbReference type="GO" id="GO:0005886">
    <property type="term" value="C:plasma membrane"/>
    <property type="evidence" value="ECO:0007669"/>
    <property type="project" value="UniProtKB-SubCell"/>
</dbReference>
<dbReference type="GO" id="GO:0046872">
    <property type="term" value="F:metal ion binding"/>
    <property type="evidence" value="ECO:0007669"/>
    <property type="project" value="UniProtKB-KW"/>
</dbReference>
<dbReference type="GO" id="GO:0008963">
    <property type="term" value="F:phospho-N-acetylmuramoyl-pentapeptide-transferase activity"/>
    <property type="evidence" value="ECO:0007669"/>
    <property type="project" value="UniProtKB-UniRule"/>
</dbReference>
<dbReference type="GO" id="GO:0051992">
    <property type="term" value="F:UDP-N-acetylmuramoyl-L-alanyl-D-glutamyl-meso-2,6-diaminopimelyl-D-alanyl-D-alanine:undecaprenyl-phosphate transferase activity"/>
    <property type="evidence" value="ECO:0007669"/>
    <property type="project" value="RHEA"/>
</dbReference>
<dbReference type="GO" id="GO:0051301">
    <property type="term" value="P:cell division"/>
    <property type="evidence" value="ECO:0007669"/>
    <property type="project" value="UniProtKB-KW"/>
</dbReference>
<dbReference type="GO" id="GO:0071555">
    <property type="term" value="P:cell wall organization"/>
    <property type="evidence" value="ECO:0007669"/>
    <property type="project" value="UniProtKB-KW"/>
</dbReference>
<dbReference type="GO" id="GO:0009252">
    <property type="term" value="P:peptidoglycan biosynthetic process"/>
    <property type="evidence" value="ECO:0007669"/>
    <property type="project" value="UniProtKB-UniRule"/>
</dbReference>
<dbReference type="GO" id="GO:0008360">
    <property type="term" value="P:regulation of cell shape"/>
    <property type="evidence" value="ECO:0007669"/>
    <property type="project" value="UniProtKB-KW"/>
</dbReference>
<dbReference type="CDD" id="cd06852">
    <property type="entry name" value="GT_MraY"/>
    <property type="match status" value="1"/>
</dbReference>
<dbReference type="HAMAP" id="MF_00038">
    <property type="entry name" value="MraY"/>
    <property type="match status" value="1"/>
</dbReference>
<dbReference type="InterPro" id="IPR000715">
    <property type="entry name" value="Glycosyl_transferase_4"/>
</dbReference>
<dbReference type="InterPro" id="IPR003524">
    <property type="entry name" value="PNAcMuramoyl-5peptid_Trfase"/>
</dbReference>
<dbReference type="InterPro" id="IPR018480">
    <property type="entry name" value="PNAcMuramoyl-5peptid_Trfase_CS"/>
</dbReference>
<dbReference type="NCBIfam" id="TIGR00445">
    <property type="entry name" value="mraY"/>
    <property type="match status" value="1"/>
</dbReference>
<dbReference type="PANTHER" id="PTHR22926">
    <property type="entry name" value="PHOSPHO-N-ACETYLMURAMOYL-PENTAPEPTIDE-TRANSFERASE"/>
    <property type="match status" value="1"/>
</dbReference>
<dbReference type="PANTHER" id="PTHR22926:SF5">
    <property type="entry name" value="PHOSPHO-N-ACETYLMURAMOYL-PENTAPEPTIDE-TRANSFERASE HOMOLOG"/>
    <property type="match status" value="1"/>
</dbReference>
<dbReference type="Pfam" id="PF00953">
    <property type="entry name" value="Glycos_transf_4"/>
    <property type="match status" value="1"/>
</dbReference>
<dbReference type="Pfam" id="PF10555">
    <property type="entry name" value="MraY_sig1"/>
    <property type="match status" value="1"/>
</dbReference>
<dbReference type="PROSITE" id="PS01347">
    <property type="entry name" value="MRAY_1"/>
    <property type="match status" value="1"/>
</dbReference>
<dbReference type="PROSITE" id="PS01348">
    <property type="entry name" value="MRAY_2"/>
    <property type="match status" value="1"/>
</dbReference>
<accession>B4TJ84</accession>
<sequence length="360" mass="40007">MLVWLAEHLVKYYSGFNVFSYLTFRAIVSLLTALFISLWMGPRMIARLQKLSFGQVVRNDGPESHFSKRGTPTMGGIMILTAIVISVLLWAYPSNPYVWCVLVVLIGYGIIGFVDDYRKVVRKDTKGLIARWKYFWMSVIALGVAFALYLVGKDTPATQLVVPFFKDVMPQLGLFYILLSYFVIVGTGNAVNLTDGLDGLAIMPTVFVAAGFALVAWATGNMNFANYLHIPYLRHAGELVIVCTAIVGAGLGFLWFNTYPAQVFMGDVGSLALGGALGIIAVLLRQEFLLVIMGGVFVVETLSVILQVGSFKLRGQRIFRMAPIHHHYELKGWPEPRVIVRFWIISLMLVLIGLATLKVR</sequence>
<proteinExistence type="inferred from homology"/>
<protein>
    <recommendedName>
        <fullName evidence="1">Phospho-N-acetylmuramoyl-pentapeptide-transferase</fullName>
        <ecNumber evidence="1">2.7.8.13</ecNumber>
    </recommendedName>
    <alternativeName>
        <fullName evidence="1">UDP-MurNAc-pentapeptide phosphotransferase</fullName>
    </alternativeName>
</protein>
<name>MRAY_SALHS</name>
<reference key="1">
    <citation type="journal article" date="2011" name="J. Bacteriol.">
        <title>Comparative genomics of 28 Salmonella enterica isolates: evidence for CRISPR-mediated adaptive sublineage evolution.</title>
        <authorList>
            <person name="Fricke W.F."/>
            <person name="Mammel M.K."/>
            <person name="McDermott P.F."/>
            <person name="Tartera C."/>
            <person name="White D.G."/>
            <person name="Leclerc J.E."/>
            <person name="Ravel J."/>
            <person name="Cebula T.A."/>
        </authorList>
    </citation>
    <scope>NUCLEOTIDE SEQUENCE [LARGE SCALE GENOMIC DNA]</scope>
    <source>
        <strain>SL476</strain>
    </source>
</reference>
<gene>
    <name evidence="1" type="primary">mraY</name>
    <name type="ordered locus">SeHA_C0137</name>
</gene>
<evidence type="ECO:0000255" key="1">
    <source>
        <dbReference type="HAMAP-Rule" id="MF_00038"/>
    </source>
</evidence>
<keyword id="KW-0131">Cell cycle</keyword>
<keyword id="KW-0132">Cell division</keyword>
<keyword id="KW-0997">Cell inner membrane</keyword>
<keyword id="KW-1003">Cell membrane</keyword>
<keyword id="KW-0133">Cell shape</keyword>
<keyword id="KW-0961">Cell wall biogenesis/degradation</keyword>
<keyword id="KW-0460">Magnesium</keyword>
<keyword id="KW-0472">Membrane</keyword>
<keyword id="KW-0479">Metal-binding</keyword>
<keyword id="KW-0573">Peptidoglycan synthesis</keyword>
<keyword id="KW-0808">Transferase</keyword>
<keyword id="KW-0812">Transmembrane</keyword>
<keyword id="KW-1133">Transmembrane helix</keyword>